<proteinExistence type="inferred from homology"/>
<name>TRUB_XYLFT</name>
<sequence length="302" mass="32640">MLMSRISYRRLDGILLLDKPAGISSNSALQVARRLLRAKKGGHTGSLDPLATGLLPLCFGEATKIAGLLLDSTKAYDADVLLGTTTTTDDAEGAVLLTRPVPTLDAEMVDALIPQLIGRIRQRAPIYSALKQGGEPLYAKARRGEVVNAPVREVEVHAIELLFLATPRLQLRVTCGSGTYIRSLVRDLGEILGCGAHINALRRRWVAPFQIPKMLTLDALEQALSAGRDPDSLLLPLVEGLAGFPALELDAQRLACFRLGQRLRDHSFQTGRVAVFSRDGIPAGLGEVDSEGLLVPQRLFNL</sequence>
<organism>
    <name type="scientific">Xylella fastidiosa (strain Temecula1 / ATCC 700964)</name>
    <dbReference type="NCBI Taxonomy" id="183190"/>
    <lineage>
        <taxon>Bacteria</taxon>
        <taxon>Pseudomonadati</taxon>
        <taxon>Pseudomonadota</taxon>
        <taxon>Gammaproteobacteria</taxon>
        <taxon>Lysobacterales</taxon>
        <taxon>Lysobacteraceae</taxon>
        <taxon>Xylella</taxon>
    </lineage>
</organism>
<protein>
    <recommendedName>
        <fullName evidence="1">tRNA pseudouridine synthase B</fullName>
        <ecNumber evidence="1">5.4.99.25</ecNumber>
    </recommendedName>
    <alternativeName>
        <fullName evidence="1">tRNA pseudouridine(55) synthase</fullName>
        <shortName evidence="1">Psi55 synthase</shortName>
    </alternativeName>
    <alternativeName>
        <fullName evidence="1">tRNA pseudouridylate synthase</fullName>
    </alternativeName>
    <alternativeName>
        <fullName evidence="1">tRNA-uridine isomerase</fullName>
    </alternativeName>
</protein>
<feature type="chain" id="PRO_0000121949" description="tRNA pseudouridine synthase B">
    <location>
        <begin position="1"/>
        <end position="302"/>
    </location>
</feature>
<feature type="active site" description="Nucleophile" evidence="1">
    <location>
        <position position="48"/>
    </location>
</feature>
<reference key="1">
    <citation type="journal article" date="2003" name="J. Bacteriol.">
        <title>Comparative analyses of the complete genome sequences of Pierce's disease and citrus variegated chlorosis strains of Xylella fastidiosa.</title>
        <authorList>
            <person name="Van Sluys M.A."/>
            <person name="de Oliveira M.C."/>
            <person name="Monteiro-Vitorello C.B."/>
            <person name="Miyaki C.Y."/>
            <person name="Furlan L.R."/>
            <person name="Camargo L.E.A."/>
            <person name="da Silva A.C.R."/>
            <person name="Moon D.H."/>
            <person name="Takita M.A."/>
            <person name="Lemos E.G.M."/>
            <person name="Machado M.A."/>
            <person name="Ferro M.I.T."/>
            <person name="da Silva F.R."/>
            <person name="Goldman M.H.S."/>
            <person name="Goldman G.H."/>
            <person name="Lemos M.V.F."/>
            <person name="El-Dorry H."/>
            <person name="Tsai S.M."/>
            <person name="Carrer H."/>
            <person name="Carraro D.M."/>
            <person name="de Oliveira R.C."/>
            <person name="Nunes L.R."/>
            <person name="Siqueira W.J."/>
            <person name="Coutinho L.L."/>
            <person name="Kimura E.T."/>
            <person name="Ferro E.S."/>
            <person name="Harakava R."/>
            <person name="Kuramae E.E."/>
            <person name="Marino C.L."/>
            <person name="Giglioti E."/>
            <person name="Abreu I.L."/>
            <person name="Alves L.M.C."/>
            <person name="do Amaral A.M."/>
            <person name="Baia G.S."/>
            <person name="Blanco S.R."/>
            <person name="Brito M.S."/>
            <person name="Cannavan F.S."/>
            <person name="Celestino A.V."/>
            <person name="da Cunha A.F."/>
            <person name="Fenille R.C."/>
            <person name="Ferro J.A."/>
            <person name="Formighieri E.F."/>
            <person name="Kishi L.T."/>
            <person name="Leoni S.G."/>
            <person name="Oliveira A.R."/>
            <person name="Rosa V.E. Jr."/>
            <person name="Sassaki F.T."/>
            <person name="Sena J.A.D."/>
            <person name="de Souza A.A."/>
            <person name="Truffi D."/>
            <person name="Tsukumo F."/>
            <person name="Yanai G.M."/>
            <person name="Zaros L.G."/>
            <person name="Civerolo E.L."/>
            <person name="Simpson A.J.G."/>
            <person name="Almeida N.F. Jr."/>
            <person name="Setubal J.C."/>
            <person name="Kitajima J.P."/>
        </authorList>
    </citation>
    <scope>NUCLEOTIDE SEQUENCE [LARGE SCALE GENOMIC DNA]</scope>
    <source>
        <strain>Temecula1 / ATCC 700964</strain>
    </source>
</reference>
<gene>
    <name evidence="1" type="primary">truB</name>
    <name type="ordered locus">PD_0196</name>
</gene>
<keyword id="KW-0413">Isomerase</keyword>
<keyword id="KW-1185">Reference proteome</keyword>
<keyword id="KW-0819">tRNA processing</keyword>
<comment type="function">
    <text evidence="1">Responsible for synthesis of pseudouridine from uracil-55 in the psi GC loop of transfer RNAs.</text>
</comment>
<comment type="catalytic activity">
    <reaction evidence="1">
        <text>uridine(55) in tRNA = pseudouridine(55) in tRNA</text>
        <dbReference type="Rhea" id="RHEA:42532"/>
        <dbReference type="Rhea" id="RHEA-COMP:10101"/>
        <dbReference type="Rhea" id="RHEA-COMP:10102"/>
        <dbReference type="ChEBI" id="CHEBI:65314"/>
        <dbReference type="ChEBI" id="CHEBI:65315"/>
        <dbReference type="EC" id="5.4.99.25"/>
    </reaction>
</comment>
<comment type="similarity">
    <text evidence="1">Belongs to the pseudouridine synthase TruB family. Type 1 subfamily.</text>
</comment>
<evidence type="ECO:0000255" key="1">
    <source>
        <dbReference type="HAMAP-Rule" id="MF_01080"/>
    </source>
</evidence>
<dbReference type="EC" id="5.4.99.25" evidence="1"/>
<dbReference type="EMBL" id="AE009442">
    <property type="protein sequence ID" value="AAO28087.1"/>
    <property type="molecule type" value="Genomic_DNA"/>
</dbReference>
<dbReference type="SMR" id="Q87EV2"/>
<dbReference type="KEGG" id="xft:PD_0196"/>
<dbReference type="HOGENOM" id="CLU_032087_0_3_6"/>
<dbReference type="Proteomes" id="UP000002516">
    <property type="component" value="Chromosome"/>
</dbReference>
<dbReference type="GO" id="GO:0003723">
    <property type="term" value="F:RNA binding"/>
    <property type="evidence" value="ECO:0007669"/>
    <property type="project" value="InterPro"/>
</dbReference>
<dbReference type="GO" id="GO:0160148">
    <property type="term" value="F:tRNA pseudouridine(55) synthase activity"/>
    <property type="evidence" value="ECO:0007669"/>
    <property type="project" value="UniProtKB-EC"/>
</dbReference>
<dbReference type="GO" id="GO:1990481">
    <property type="term" value="P:mRNA pseudouridine synthesis"/>
    <property type="evidence" value="ECO:0007669"/>
    <property type="project" value="TreeGrafter"/>
</dbReference>
<dbReference type="GO" id="GO:0031119">
    <property type="term" value="P:tRNA pseudouridine synthesis"/>
    <property type="evidence" value="ECO:0007669"/>
    <property type="project" value="UniProtKB-UniRule"/>
</dbReference>
<dbReference type="CDD" id="cd02573">
    <property type="entry name" value="PseudoU_synth_EcTruB"/>
    <property type="match status" value="1"/>
</dbReference>
<dbReference type="CDD" id="cd21152">
    <property type="entry name" value="PUA_TruB_bacterial"/>
    <property type="match status" value="1"/>
</dbReference>
<dbReference type="Gene3D" id="3.30.2350.10">
    <property type="entry name" value="Pseudouridine synthase"/>
    <property type="match status" value="1"/>
</dbReference>
<dbReference type="HAMAP" id="MF_01080">
    <property type="entry name" value="TruB_bact"/>
    <property type="match status" value="1"/>
</dbReference>
<dbReference type="InterPro" id="IPR020103">
    <property type="entry name" value="PsdUridine_synth_cat_dom_sf"/>
</dbReference>
<dbReference type="InterPro" id="IPR002501">
    <property type="entry name" value="PsdUridine_synth_N"/>
</dbReference>
<dbReference type="InterPro" id="IPR015947">
    <property type="entry name" value="PUA-like_sf"/>
</dbReference>
<dbReference type="InterPro" id="IPR014780">
    <property type="entry name" value="tRNA_psdUridine_synth_TruB"/>
</dbReference>
<dbReference type="InterPro" id="IPR015240">
    <property type="entry name" value="tRNA_sdUridine_synth_fam1_C"/>
</dbReference>
<dbReference type="InterPro" id="IPR032819">
    <property type="entry name" value="TruB_C"/>
</dbReference>
<dbReference type="NCBIfam" id="TIGR00431">
    <property type="entry name" value="TruB"/>
    <property type="match status" value="1"/>
</dbReference>
<dbReference type="PANTHER" id="PTHR13767:SF2">
    <property type="entry name" value="PSEUDOURIDYLATE SYNTHASE TRUB1"/>
    <property type="match status" value="1"/>
</dbReference>
<dbReference type="PANTHER" id="PTHR13767">
    <property type="entry name" value="TRNA-PSEUDOURIDINE SYNTHASE"/>
    <property type="match status" value="1"/>
</dbReference>
<dbReference type="Pfam" id="PF09157">
    <property type="entry name" value="TruB-C_2"/>
    <property type="match status" value="1"/>
</dbReference>
<dbReference type="Pfam" id="PF16198">
    <property type="entry name" value="TruB_C_2"/>
    <property type="match status" value="1"/>
</dbReference>
<dbReference type="Pfam" id="PF01509">
    <property type="entry name" value="TruB_N"/>
    <property type="match status" value="1"/>
</dbReference>
<dbReference type="SUPFAM" id="SSF55120">
    <property type="entry name" value="Pseudouridine synthase"/>
    <property type="match status" value="1"/>
</dbReference>
<dbReference type="SUPFAM" id="SSF88697">
    <property type="entry name" value="PUA domain-like"/>
    <property type="match status" value="1"/>
</dbReference>
<accession>Q87EV2</accession>